<evidence type="ECO:0000250" key="1">
    <source>
        <dbReference type="UniProtKB" id="Q95KV7"/>
    </source>
</evidence>
<evidence type="ECO:0000250" key="2">
    <source>
        <dbReference type="UniProtKB" id="Q9P0J0"/>
    </source>
</evidence>
<evidence type="ECO:0000255" key="3"/>
<evidence type="ECO:0000305" key="4"/>
<proteinExistence type="evidence at transcript level"/>
<protein>
    <recommendedName>
        <fullName>NADH dehydrogenase [ubiquinone] 1 alpha subcomplex subunit 13</fullName>
    </recommendedName>
    <alternativeName>
        <fullName>Complex I-B16.6</fullName>
        <shortName>CI-B16.6</shortName>
    </alternativeName>
    <alternativeName>
        <fullName>NADH-ubiquinone oxidoreductase B16.6 subunit</fullName>
    </alternativeName>
</protein>
<name>NDUAD_PANTR</name>
<feature type="initiator methionine" description="Removed" evidence="1">
    <location>
        <position position="1"/>
    </location>
</feature>
<feature type="chain" id="PRO_0000251821" description="NADH dehydrogenase [ubiquinone] 1 alpha subcomplex subunit 13">
    <location>
        <begin position="2"/>
        <end position="144"/>
    </location>
</feature>
<feature type="transmembrane region" description="Helical" evidence="3">
    <location>
        <begin position="30"/>
        <end position="51"/>
    </location>
</feature>
<feature type="modified residue" description="N-acetylalanine" evidence="1">
    <location>
        <position position="2"/>
    </location>
</feature>
<gene>
    <name type="primary">NDUFA13</name>
</gene>
<comment type="function">
    <text evidence="2">Accessory subunit of the mitochondrial membrane respiratory chain NADH dehydrogenase (Complex I), that is believed not to be involved in catalysis. Complex I functions in the transfer of electrons from NADH to the respiratory chain. The immediate electron acceptor for the enzyme is believed to be ubiquinone. Involved in the interferon/all-trans-retinoic acid (IFN/RA) induced cell death. This apoptotic activity is inhibited by interaction with viral IRF1. Prevents the transactivation of STAT3 target genes. May play a role in CARD15-mediated innate mucosal responses and serve to regulate intestinal epithelial cell responses to microbes.</text>
</comment>
<comment type="subunit">
    <text evidence="2">Complex I is composed of 45 different subunits. Interacts with CARD15, but not with CARD4. Interacts with STAT3, but not with STAT1, STAT2 and STAT5A. Interacts with OLFM4.</text>
</comment>
<comment type="subcellular location">
    <subcellularLocation>
        <location evidence="2">Mitochondrion inner membrane</location>
        <topology evidence="3">Single-pass membrane protein</topology>
        <orientation evidence="2">Matrix side</orientation>
    </subcellularLocation>
    <subcellularLocation>
        <location evidence="2">Nucleus</location>
    </subcellularLocation>
    <text evidence="2">Localizes mainly in the mitochondrion. May be translocated into the nucleus upon IFN/RA treatment.</text>
</comment>
<comment type="similarity">
    <text evidence="4">Belongs to the complex I NDUFA13 subunit family.</text>
</comment>
<organism>
    <name type="scientific">Pan troglodytes</name>
    <name type="common">Chimpanzee</name>
    <dbReference type="NCBI Taxonomy" id="9598"/>
    <lineage>
        <taxon>Eukaryota</taxon>
        <taxon>Metazoa</taxon>
        <taxon>Chordata</taxon>
        <taxon>Craniata</taxon>
        <taxon>Vertebrata</taxon>
        <taxon>Euteleostomi</taxon>
        <taxon>Mammalia</taxon>
        <taxon>Eutheria</taxon>
        <taxon>Euarchontoglires</taxon>
        <taxon>Primates</taxon>
        <taxon>Haplorrhini</taxon>
        <taxon>Catarrhini</taxon>
        <taxon>Hominidae</taxon>
        <taxon>Pan</taxon>
    </lineage>
</organism>
<reference key="1">
    <citation type="journal article" date="2006" name="Gene">
        <title>Adaptive selection of mitochondrial complex I subunits during primate radiation.</title>
        <authorList>
            <person name="Mishmar D."/>
            <person name="Ruiz-Pesini E."/>
            <person name="Mondragon-Palomino M."/>
            <person name="Procaccio V."/>
            <person name="Gaut B."/>
            <person name="Wallace D.C."/>
        </authorList>
    </citation>
    <scope>NUCLEOTIDE SEQUENCE [MRNA]</scope>
</reference>
<dbReference type="EMBL" id="DQ885744">
    <property type="protein sequence ID" value="ABH12253.1"/>
    <property type="molecule type" value="mRNA"/>
</dbReference>
<dbReference type="RefSeq" id="NP_001065256.1">
    <property type="nucleotide sequence ID" value="NM_001071788.1"/>
</dbReference>
<dbReference type="SMR" id="Q0MQ90"/>
<dbReference type="FunCoup" id="Q0MQ90">
    <property type="interactions" value="2310"/>
</dbReference>
<dbReference type="STRING" id="9598.ENSPTRP00000068091"/>
<dbReference type="PaxDb" id="9598-ENSPTRP00000018326"/>
<dbReference type="Ensembl" id="ENSPTRT00000086775.1">
    <property type="protein sequence ID" value="ENSPTRP00000068091.1"/>
    <property type="gene ID" value="ENSPTRG00000052571.1"/>
</dbReference>
<dbReference type="Ensembl" id="ENSPTRT00000106024.1">
    <property type="protein sequence ID" value="ENSPTRP00000081122.1"/>
    <property type="gene ID" value="ENSPTRG00000010741.6"/>
</dbReference>
<dbReference type="GeneID" id="455877"/>
<dbReference type="KEGG" id="ptr:455877"/>
<dbReference type="CTD" id="51079"/>
<dbReference type="VGNC" id="VGNC:6639">
    <property type="gene designation" value="NDUFA13"/>
</dbReference>
<dbReference type="eggNOG" id="KOG3300">
    <property type="taxonomic scope" value="Eukaryota"/>
</dbReference>
<dbReference type="GeneTree" id="ENSGT00390000000719"/>
<dbReference type="HOGENOM" id="CLU_119720_0_0_1"/>
<dbReference type="InParanoid" id="Q0MQ90"/>
<dbReference type="OrthoDB" id="14758at9604"/>
<dbReference type="TreeFam" id="TF315182"/>
<dbReference type="Proteomes" id="UP000002277">
    <property type="component" value="Chromosome 19"/>
</dbReference>
<dbReference type="Bgee" id="ENSPTRG00000010741">
    <property type="expression patterns" value="Expressed in Brodmann (1909) area 10 and 21 other cell types or tissues"/>
</dbReference>
<dbReference type="GO" id="GO:0005737">
    <property type="term" value="C:cytoplasm"/>
    <property type="evidence" value="ECO:0000250"/>
    <property type="project" value="UniProtKB"/>
</dbReference>
<dbReference type="GO" id="GO:0005743">
    <property type="term" value="C:mitochondrial inner membrane"/>
    <property type="evidence" value="ECO:0007669"/>
    <property type="project" value="UniProtKB-SubCell"/>
</dbReference>
<dbReference type="GO" id="GO:0031966">
    <property type="term" value="C:mitochondrial membrane"/>
    <property type="evidence" value="ECO:0000250"/>
    <property type="project" value="UniProtKB"/>
</dbReference>
<dbReference type="GO" id="GO:0005739">
    <property type="term" value="C:mitochondrion"/>
    <property type="evidence" value="ECO:0000250"/>
    <property type="project" value="UniProtKB"/>
</dbReference>
<dbReference type="GO" id="GO:0005654">
    <property type="term" value="C:nucleoplasm"/>
    <property type="evidence" value="ECO:0000250"/>
    <property type="project" value="UniProtKB"/>
</dbReference>
<dbReference type="GO" id="GO:0098803">
    <property type="term" value="C:respiratory chain complex"/>
    <property type="evidence" value="ECO:0000250"/>
    <property type="project" value="UniProtKB"/>
</dbReference>
<dbReference type="GO" id="GO:0045271">
    <property type="term" value="C:respiratory chain complex I"/>
    <property type="evidence" value="ECO:0000250"/>
    <property type="project" value="UniProtKB"/>
</dbReference>
<dbReference type="GO" id="GO:0035458">
    <property type="term" value="P:cellular response to interferon-beta"/>
    <property type="evidence" value="ECO:0007669"/>
    <property type="project" value="Ensembl"/>
</dbReference>
<dbReference type="GO" id="GO:0071300">
    <property type="term" value="P:cellular response to retinoic acid"/>
    <property type="evidence" value="ECO:0007669"/>
    <property type="project" value="Ensembl"/>
</dbReference>
<dbReference type="GO" id="GO:0097191">
    <property type="term" value="P:extrinsic apoptotic signaling pathway"/>
    <property type="evidence" value="ECO:0007669"/>
    <property type="project" value="Ensembl"/>
</dbReference>
<dbReference type="GO" id="GO:0032981">
    <property type="term" value="P:mitochondrial respiratory chain complex I assembly"/>
    <property type="evidence" value="ECO:0007669"/>
    <property type="project" value="Ensembl"/>
</dbReference>
<dbReference type="GO" id="GO:0045892">
    <property type="term" value="P:negative regulation of DNA-templated transcription"/>
    <property type="evidence" value="ECO:0000250"/>
    <property type="project" value="UniProtKB"/>
</dbReference>
<dbReference type="GO" id="GO:1900119">
    <property type="term" value="P:positive regulation of execution phase of apoptosis"/>
    <property type="evidence" value="ECO:0007669"/>
    <property type="project" value="Ensembl"/>
</dbReference>
<dbReference type="GO" id="GO:0045732">
    <property type="term" value="P:positive regulation of protein catabolic process"/>
    <property type="evidence" value="ECO:0007669"/>
    <property type="project" value="Ensembl"/>
</dbReference>
<dbReference type="GO" id="GO:0045039">
    <property type="term" value="P:protein insertion into mitochondrial inner membrane"/>
    <property type="evidence" value="ECO:0007669"/>
    <property type="project" value="Ensembl"/>
</dbReference>
<dbReference type="InterPro" id="IPR009346">
    <property type="entry name" value="GRIM-19"/>
</dbReference>
<dbReference type="PANTHER" id="PTHR12966:SF0">
    <property type="entry name" value="NADH DEHYDROGENASE [UBIQUINONE] 1 ALPHA SUBCOMPLEX SUBUNIT 13"/>
    <property type="match status" value="1"/>
</dbReference>
<dbReference type="PANTHER" id="PTHR12966">
    <property type="entry name" value="NADH DEHYDROGENASE UBIQUINONE 1 ALPHA SUBCOMPLEX SUBUNIT 13"/>
    <property type="match status" value="1"/>
</dbReference>
<dbReference type="Pfam" id="PF06212">
    <property type="entry name" value="GRIM-19"/>
    <property type="match status" value="1"/>
</dbReference>
<accession>Q0MQ90</accession>
<keyword id="KW-0007">Acetylation</keyword>
<keyword id="KW-0249">Electron transport</keyword>
<keyword id="KW-0472">Membrane</keyword>
<keyword id="KW-0496">Mitochondrion</keyword>
<keyword id="KW-0999">Mitochondrion inner membrane</keyword>
<keyword id="KW-0539">Nucleus</keyword>
<keyword id="KW-1185">Reference proteome</keyword>
<keyword id="KW-0679">Respiratory chain</keyword>
<keyword id="KW-0812">Transmembrane</keyword>
<keyword id="KW-1133">Transmembrane helix</keyword>
<keyword id="KW-0813">Transport</keyword>
<sequence>MAASKVKQDMPPPGGYGPIDYKRNLPRRGLSGYSMLAIGIGTLIYGHWSIMKWNRERRRLQIEDFEARIALLPLLQAETDRRTLQMLRENLEEEAIIMKDVPDWKVGESVFHTTRWVPPLIGELYGLRTTEEALHASHGFMWYM</sequence>